<protein>
    <recommendedName>
        <fullName evidence="2">MSDIN-like toxin proprotein 1</fullName>
    </recommendedName>
    <component>
        <recommendedName>
            <fullName evidence="2">Toxin MSD1</fullName>
        </recommendedName>
    </component>
</protein>
<evidence type="ECO:0000250" key="1">
    <source>
        <dbReference type="UniProtKB" id="A0A067SLB9"/>
    </source>
</evidence>
<evidence type="ECO:0000303" key="2">
    <source>
    </source>
</evidence>
<evidence type="ECO:0000305" key="3"/>
<evidence type="ECO:0000305" key="4">
    <source>
    </source>
</evidence>
<dbReference type="EMBL" id="EU196144">
    <property type="protein sequence ID" value="ABW87773.1"/>
    <property type="molecule type" value="Genomic_DNA"/>
</dbReference>
<dbReference type="SMR" id="A8W7M9"/>
<dbReference type="GO" id="GO:0090729">
    <property type="term" value="F:toxin activity"/>
    <property type="evidence" value="ECO:0007669"/>
    <property type="project" value="UniProtKB-KW"/>
</dbReference>
<dbReference type="InterPro" id="IPR027582">
    <property type="entry name" value="Amanitin/phalloidin"/>
</dbReference>
<dbReference type="NCBIfam" id="TIGR04309">
    <property type="entry name" value="amanitin"/>
    <property type="match status" value="1"/>
</dbReference>
<reference key="1">
    <citation type="journal article" date="2007" name="Proc. Natl. Acad. Sci. U.S.A.">
        <title>Gene family encoding the major toxins of lethal Amanita mushrooms.</title>
        <authorList>
            <person name="Hallen H.E."/>
            <person name="Luo H."/>
            <person name="Scott-Craig J.S."/>
            <person name="Walton J.D."/>
        </authorList>
    </citation>
    <scope>NUCLEOTIDE SEQUENCE [GENOMIC DNA]</scope>
    <scope>FUNCTION</scope>
</reference>
<gene>
    <name evidence="2" type="primary">MSD1</name>
</gene>
<name>MSD1_AMABI</name>
<feature type="propeptide" id="PRO_0000443635" evidence="4">
    <location>
        <begin position="1"/>
        <end position="10"/>
    </location>
</feature>
<feature type="peptide" id="PRO_0000443636" description="Toxin MSD1" evidence="4">
    <location>
        <begin position="11"/>
        <end position="18"/>
    </location>
</feature>
<feature type="propeptide" id="PRO_0000443637" evidence="4">
    <location>
        <begin position="19"/>
        <end position="32"/>
    </location>
</feature>
<feature type="cross-link" description="Cyclopeptide (Gly-Pro)" evidence="4">
    <location>
        <begin position="11"/>
        <end position="18"/>
    </location>
</feature>
<feature type="non-terminal residue" evidence="3">
    <location>
        <position position="32"/>
    </location>
</feature>
<sequence>MSDINVTRLPGFVPILFPCVGDDVNTALTRGE</sequence>
<accession>A8W7M9</accession>
<organism>
    <name type="scientific">Amanita bisporigera</name>
    <name type="common">Destroying angel</name>
    <dbReference type="NCBI Taxonomy" id="87325"/>
    <lineage>
        <taxon>Eukaryota</taxon>
        <taxon>Fungi</taxon>
        <taxon>Dikarya</taxon>
        <taxon>Basidiomycota</taxon>
        <taxon>Agaricomycotina</taxon>
        <taxon>Agaricomycetes</taxon>
        <taxon>Agaricomycetidae</taxon>
        <taxon>Agaricales</taxon>
        <taxon>Pluteineae</taxon>
        <taxon>Amanitaceae</taxon>
        <taxon>Amanita</taxon>
    </lineage>
</organism>
<comment type="function">
    <text evidence="4">Probable toxin that belongs to the MSDIN-like toxin family responsible for a large number of food poisoning cases and deaths (PubMed:18025465).</text>
</comment>
<comment type="PTM">
    <text evidence="1 4">Processed by the macrocyclase-peptidase enzyme POPB to yield a toxic cyclic octapeptide (PubMed:18025465). POPB first removes 10 residues from the N-terminus (By similarity). Conformational trapping of the remaining peptide forces the enzyme to release this intermediate rather than proceed to macrocyclization (By similarity). The enzyme rebinds the remaining peptide in a different conformation and catalyzes macrocyclization of the N-terminal 8 residues (By similarity).</text>
</comment>
<comment type="similarity">
    <text evidence="3">Belongs to the MSDIN fungal toxin family.</text>
</comment>
<proteinExistence type="inferred from homology"/>
<keyword id="KW-0800">Toxin</keyword>